<comment type="similarity">
    <text evidence="1">Belongs to the UPF0302 family.</text>
</comment>
<dbReference type="EMBL" id="AE016830">
    <property type="protein sequence ID" value="AAO81341.1"/>
    <property type="molecule type" value="Genomic_DNA"/>
</dbReference>
<dbReference type="RefSeq" id="NP_815271.1">
    <property type="nucleotide sequence ID" value="NC_004668.1"/>
</dbReference>
<dbReference type="RefSeq" id="WP_002382318.1">
    <property type="nucleotide sequence ID" value="NZ_KE136528.1"/>
</dbReference>
<dbReference type="SMR" id="Q834S9"/>
<dbReference type="STRING" id="226185.EF_1554"/>
<dbReference type="EnsemblBacteria" id="AAO81341">
    <property type="protein sequence ID" value="AAO81341"/>
    <property type="gene ID" value="EF_1554"/>
</dbReference>
<dbReference type="KEGG" id="efa:EF1554"/>
<dbReference type="PATRIC" id="fig|226185.45.peg.1951"/>
<dbReference type="eggNOG" id="COG5582">
    <property type="taxonomic scope" value="Bacteria"/>
</dbReference>
<dbReference type="HOGENOM" id="CLU_126019_1_0_9"/>
<dbReference type="Proteomes" id="UP000001415">
    <property type="component" value="Chromosome"/>
</dbReference>
<dbReference type="Gene3D" id="3.40.1530.30">
    <property type="entry name" value="Uncharacterised family UPF0302, N-terminal domain"/>
    <property type="match status" value="1"/>
</dbReference>
<dbReference type="Gene3D" id="4.10.810.10">
    <property type="entry name" value="Virus Scaffolding Protein, Chain A"/>
    <property type="match status" value="1"/>
</dbReference>
<dbReference type="HAMAP" id="MF_00760">
    <property type="entry name" value="UPF0302"/>
    <property type="match status" value="1"/>
</dbReference>
<dbReference type="InterPro" id="IPR014957">
    <property type="entry name" value="IDEAL_dom"/>
</dbReference>
<dbReference type="InterPro" id="IPR011188">
    <property type="entry name" value="UPF0302"/>
</dbReference>
<dbReference type="InterPro" id="IPR014963">
    <property type="entry name" value="UPF0302_N"/>
</dbReference>
<dbReference type="InterPro" id="IPR038091">
    <property type="entry name" value="UPF0302_N_sf"/>
</dbReference>
<dbReference type="InterPro" id="IPR027393">
    <property type="entry name" value="Virus_scaffolding_prot_C"/>
</dbReference>
<dbReference type="NCBIfam" id="NF002965">
    <property type="entry name" value="PRK03636.1"/>
    <property type="match status" value="1"/>
</dbReference>
<dbReference type="Pfam" id="PF08858">
    <property type="entry name" value="IDEAL"/>
    <property type="match status" value="1"/>
</dbReference>
<dbReference type="Pfam" id="PF08864">
    <property type="entry name" value="UPF0302"/>
    <property type="match status" value="1"/>
</dbReference>
<dbReference type="PIRSF" id="PIRSF007165">
    <property type="entry name" value="UCP007165"/>
    <property type="match status" value="1"/>
</dbReference>
<dbReference type="SMART" id="SM00914">
    <property type="entry name" value="IDEAL"/>
    <property type="match status" value="1"/>
</dbReference>
<sequence>MFVSLSEKKKFLTWLVNTAPFGRREVLWILNYLLTHDAILNNVHFVENVEKTDRGIRVVADGLGKEPLLLFIQAQEFTDPEQIFHEIRMNWRKALYLECVFPEAWQTSQYLSVLEDNPFAPWNEQVDQEVARAIDQYFKQEEQTQRMALLKAQIDDALETGNKEAFLELSDELNRLKQQ</sequence>
<protein>
    <recommendedName>
        <fullName evidence="1">UPF0302 protein EF_1554</fullName>
    </recommendedName>
</protein>
<keyword id="KW-1185">Reference proteome</keyword>
<evidence type="ECO:0000255" key="1">
    <source>
        <dbReference type="HAMAP-Rule" id="MF_00760"/>
    </source>
</evidence>
<reference key="1">
    <citation type="journal article" date="2003" name="Science">
        <title>Role of mobile DNA in the evolution of vancomycin-resistant Enterococcus faecalis.</title>
        <authorList>
            <person name="Paulsen I.T."/>
            <person name="Banerjei L."/>
            <person name="Myers G.S.A."/>
            <person name="Nelson K.E."/>
            <person name="Seshadri R."/>
            <person name="Read T.D."/>
            <person name="Fouts D.E."/>
            <person name="Eisen J.A."/>
            <person name="Gill S.R."/>
            <person name="Heidelberg J.F."/>
            <person name="Tettelin H."/>
            <person name="Dodson R.J."/>
            <person name="Umayam L.A."/>
            <person name="Brinkac L.M."/>
            <person name="Beanan M.J."/>
            <person name="Daugherty S.C."/>
            <person name="DeBoy R.T."/>
            <person name="Durkin S.A."/>
            <person name="Kolonay J.F."/>
            <person name="Madupu R."/>
            <person name="Nelson W.C."/>
            <person name="Vamathevan J.J."/>
            <person name="Tran B."/>
            <person name="Upton J."/>
            <person name="Hansen T."/>
            <person name="Shetty J."/>
            <person name="Khouri H.M."/>
            <person name="Utterback T.R."/>
            <person name="Radune D."/>
            <person name="Ketchum K.A."/>
            <person name="Dougherty B.A."/>
            <person name="Fraser C.M."/>
        </authorList>
    </citation>
    <scope>NUCLEOTIDE SEQUENCE [LARGE SCALE GENOMIC DNA]</scope>
    <source>
        <strain>ATCC 700802 / V583</strain>
    </source>
</reference>
<gene>
    <name type="ordered locus">EF_1554</name>
</gene>
<organism>
    <name type="scientific">Enterococcus faecalis (strain ATCC 700802 / V583)</name>
    <dbReference type="NCBI Taxonomy" id="226185"/>
    <lineage>
        <taxon>Bacteria</taxon>
        <taxon>Bacillati</taxon>
        <taxon>Bacillota</taxon>
        <taxon>Bacilli</taxon>
        <taxon>Lactobacillales</taxon>
        <taxon>Enterococcaceae</taxon>
        <taxon>Enterococcus</taxon>
    </lineage>
</organism>
<proteinExistence type="inferred from homology"/>
<accession>Q834S9</accession>
<feature type="chain" id="PRO_0000216099" description="UPF0302 protein EF_1554">
    <location>
        <begin position="1"/>
        <end position="179"/>
    </location>
</feature>
<name>Y1554_ENTFA</name>